<protein>
    <recommendedName>
        <fullName>Nuclease EXOG, mitochondrial</fullName>
        <ecNumber>3.1.30.-</ecNumber>
    </recommendedName>
    <alternativeName>
        <fullName>Endonuclease G-like 1</fullName>
        <shortName>Endo G-like 1</shortName>
    </alternativeName>
</protein>
<evidence type="ECO:0000250" key="1"/>
<evidence type="ECO:0000255" key="2"/>
<evidence type="ECO:0000305" key="3"/>
<gene>
    <name type="primary">exog</name>
    <name type="synonym">endogl1</name>
</gene>
<proteinExistence type="evidence at transcript level"/>
<name>EXOG_XENLA</name>
<comment type="function">
    <text evidence="1">Endo/exonuclease with nicking activity towards supercoiled DNA, a preference for single-stranded DNA and 5'-3' exonuclease activity.</text>
</comment>
<comment type="cofactor">
    <cofactor evidence="1">
        <name>a divalent metal cation</name>
        <dbReference type="ChEBI" id="CHEBI:60240"/>
    </cofactor>
</comment>
<comment type="subunit">
    <text evidence="1">Homodimer.</text>
</comment>
<comment type="subcellular location">
    <subcellularLocation>
        <location evidence="1">Mitochondrion inner membrane</location>
    </subcellularLocation>
</comment>
<comment type="miscellaneous">
    <text evidence="1">The active site contains 1 hydrated divalent metal cation that has only 1 direct interaction with the protein; all other interactions are via water molecules.</text>
</comment>
<comment type="similarity">
    <text evidence="3">Belongs to the DNA/RNA non-specific endonuclease family.</text>
</comment>
<accession>Q0IH72</accession>
<dbReference type="EC" id="3.1.30.-"/>
<dbReference type="EMBL" id="BC123280">
    <property type="protein sequence ID" value="AAI23281.1"/>
    <property type="molecule type" value="mRNA"/>
</dbReference>
<dbReference type="RefSeq" id="NP_001090384.1">
    <property type="nucleotide sequence ID" value="NM_001096915.1"/>
</dbReference>
<dbReference type="SMR" id="Q0IH72"/>
<dbReference type="DNASU" id="779295"/>
<dbReference type="GeneID" id="779295"/>
<dbReference type="KEGG" id="xla:779295"/>
<dbReference type="AGR" id="Xenbase:XB-GENE-981842"/>
<dbReference type="CTD" id="779295"/>
<dbReference type="Xenbase" id="XB-GENE-981842">
    <property type="gene designation" value="exog.L"/>
</dbReference>
<dbReference type="OrthoDB" id="5418055at2759"/>
<dbReference type="Proteomes" id="UP000186698">
    <property type="component" value="Chromosome 6L"/>
</dbReference>
<dbReference type="Bgee" id="779295">
    <property type="expression patterns" value="Expressed in oocyte and 19 other cell types or tissues"/>
</dbReference>
<dbReference type="GO" id="GO:0005743">
    <property type="term" value="C:mitochondrial inner membrane"/>
    <property type="evidence" value="ECO:0000318"/>
    <property type="project" value="GO_Central"/>
</dbReference>
<dbReference type="GO" id="GO:0005634">
    <property type="term" value="C:nucleus"/>
    <property type="evidence" value="ECO:0000318"/>
    <property type="project" value="GO_Central"/>
</dbReference>
<dbReference type="GO" id="GO:0008409">
    <property type="term" value="F:5'-3' exonuclease activity"/>
    <property type="evidence" value="ECO:0000318"/>
    <property type="project" value="GO_Central"/>
</dbReference>
<dbReference type="GO" id="GO:0046872">
    <property type="term" value="F:metal ion binding"/>
    <property type="evidence" value="ECO:0007669"/>
    <property type="project" value="UniProtKB-KW"/>
</dbReference>
<dbReference type="GO" id="GO:0003676">
    <property type="term" value="F:nucleic acid binding"/>
    <property type="evidence" value="ECO:0007669"/>
    <property type="project" value="InterPro"/>
</dbReference>
<dbReference type="GO" id="GO:0004521">
    <property type="term" value="F:RNA endonuclease activity"/>
    <property type="evidence" value="ECO:0000318"/>
    <property type="project" value="GO_Central"/>
</dbReference>
<dbReference type="GO" id="GO:0000014">
    <property type="term" value="F:single-stranded DNA endodeoxyribonuclease activity"/>
    <property type="evidence" value="ECO:0000318"/>
    <property type="project" value="GO_Central"/>
</dbReference>
<dbReference type="GO" id="GO:0006309">
    <property type="term" value="P:apoptotic DNA fragmentation"/>
    <property type="evidence" value="ECO:0000318"/>
    <property type="project" value="GO_Central"/>
</dbReference>
<dbReference type="CDD" id="cd00091">
    <property type="entry name" value="NUC"/>
    <property type="match status" value="1"/>
</dbReference>
<dbReference type="FunFam" id="3.40.570.10:FF:000003">
    <property type="entry name" value="Nuclease EXOG, mitochondrial"/>
    <property type="match status" value="1"/>
</dbReference>
<dbReference type="Gene3D" id="6.10.250.1250">
    <property type="match status" value="1"/>
</dbReference>
<dbReference type="Gene3D" id="3.40.570.10">
    <property type="entry name" value="Extracellular Endonuclease, subunit A"/>
    <property type="match status" value="1"/>
</dbReference>
<dbReference type="InterPro" id="IPR044929">
    <property type="entry name" value="DNA/RNA_non-sp_Endonuclease_sf"/>
</dbReference>
<dbReference type="InterPro" id="IPR001604">
    <property type="entry name" value="Endo_G_ENPP1-like_dom"/>
</dbReference>
<dbReference type="InterPro" id="IPR020821">
    <property type="entry name" value="ENPP1-3/EXOG-like_nuc-like"/>
</dbReference>
<dbReference type="InterPro" id="IPR041003">
    <property type="entry name" value="Exog_C"/>
</dbReference>
<dbReference type="InterPro" id="IPR044925">
    <property type="entry name" value="His-Me_finger_sf"/>
</dbReference>
<dbReference type="InterPro" id="IPR040255">
    <property type="entry name" value="Non-specific_endonuclease"/>
</dbReference>
<dbReference type="PANTHER" id="PTHR13966">
    <property type="entry name" value="ENDONUCLEASE RELATED"/>
    <property type="match status" value="1"/>
</dbReference>
<dbReference type="PANTHER" id="PTHR13966:SF19">
    <property type="entry name" value="NUCLEASE EXOG, MITOCHONDRIAL"/>
    <property type="match status" value="1"/>
</dbReference>
<dbReference type="Pfam" id="PF01223">
    <property type="entry name" value="Endonuclease_NS"/>
    <property type="match status" value="1"/>
</dbReference>
<dbReference type="Pfam" id="PF18026">
    <property type="entry name" value="Exog_C"/>
    <property type="match status" value="1"/>
</dbReference>
<dbReference type="SMART" id="SM00892">
    <property type="entry name" value="Endonuclease_NS"/>
    <property type="match status" value="1"/>
</dbReference>
<dbReference type="SMART" id="SM00477">
    <property type="entry name" value="NUC"/>
    <property type="match status" value="1"/>
</dbReference>
<dbReference type="SUPFAM" id="SSF54060">
    <property type="entry name" value="His-Me finger endonucleases"/>
    <property type="match status" value="1"/>
</dbReference>
<feature type="transit peptide" description="Mitochondrion" evidence="2">
    <location>
        <begin position="1"/>
        <end status="unknown"/>
    </location>
</feature>
<feature type="chain" id="PRO_0000342612" description="Nuclease EXOG, mitochondrial">
    <location>
        <begin status="unknown"/>
        <end position="358"/>
    </location>
</feature>
<feature type="active site" description="Proton acceptor" evidence="1">
    <location>
        <position position="132"/>
    </location>
</feature>
<feature type="binding site" evidence="1">
    <location>
        <position position="163"/>
    </location>
    <ligand>
        <name>a divalent metal cation</name>
        <dbReference type="ChEBI" id="CHEBI:60240"/>
        <note>catalytic</note>
    </ligand>
</feature>
<keyword id="KW-0255">Endonuclease</keyword>
<keyword id="KW-0378">Hydrolase</keyword>
<keyword id="KW-0472">Membrane</keyword>
<keyword id="KW-0479">Metal-binding</keyword>
<keyword id="KW-0496">Mitochondrion</keyword>
<keyword id="KW-0999">Mitochondrion inner membrane</keyword>
<keyword id="KW-0540">Nuclease</keyword>
<keyword id="KW-1185">Reference proteome</keyword>
<keyword id="KW-0809">Transit peptide</keyword>
<reference key="1">
    <citation type="submission" date="2006-09" db="EMBL/GenBank/DDBJ databases">
        <authorList>
            <consortium name="NIH - Xenopus Gene Collection (XGC) project"/>
        </authorList>
    </citation>
    <scope>NUCLEOTIDE SEQUENCE [LARGE SCALE MRNA]</scope>
    <source>
        <tissue>Embryo</tissue>
    </source>
</reference>
<sequence length="358" mass="40494">MVASFSWRLLSPRFLGGFVLGAAASSASCVAALQLYDKREPELAPVAPEEKDPLEEYGFPLTGTEARQYINHALAYDPAKRTPKWVIEHLSRTKTVGSADRKHCKFKPDPNIPKMFSATNEDYLGSGWTRGHMAPAGDNKFSTEAMAETFYLSNIVPQNYENNAGFWNRMEMYCRDLTKRFEDVWVVSGPLELPTSHEDGKKRVTYEVIGADEVAVPSHLYKVILVREKGSEQPLAIGAFVVPNSPIGFDHQLPEYKVQLEDLEKMSGLLFFPQLDRDKGLKPLCDVDSCRLIQLHEFKLYIAARRVGGARNLQKLERILSELKEEGITPDGYLLDLYEKKRKEFSLKSGTDRDERKG</sequence>
<organism>
    <name type="scientific">Xenopus laevis</name>
    <name type="common">African clawed frog</name>
    <dbReference type="NCBI Taxonomy" id="8355"/>
    <lineage>
        <taxon>Eukaryota</taxon>
        <taxon>Metazoa</taxon>
        <taxon>Chordata</taxon>
        <taxon>Craniata</taxon>
        <taxon>Vertebrata</taxon>
        <taxon>Euteleostomi</taxon>
        <taxon>Amphibia</taxon>
        <taxon>Batrachia</taxon>
        <taxon>Anura</taxon>
        <taxon>Pipoidea</taxon>
        <taxon>Pipidae</taxon>
        <taxon>Xenopodinae</taxon>
        <taxon>Xenopus</taxon>
        <taxon>Xenopus</taxon>
    </lineage>
</organism>